<comment type="function">
    <text>Proposed to synthesize NOD factor fatty acyl chain. Involved in the synthesis of a highly unsaturated fatty acid moiety, which forms part of a lipo-oligosaccharide that is responsible for host specificity.</text>
</comment>
<comment type="subcellular location">
    <subcellularLocation>
        <location>Cell inner membrane</location>
    </subcellularLocation>
</comment>
<comment type="similarity">
    <text evidence="3">Belongs to the thiolase-like superfamily. Beta-ketoacyl-ACP synthases family.</text>
</comment>
<accession>P72331</accession>
<reference key="1">
    <citation type="journal article" date="1997" name="Mol. Plant Microbe Interact.">
        <title>Sequence and mutational analysis of the 6.7-kb region containing nodAFEG genes of Rhizobium sp. strain N33: evidence of DNA rearrangements.</title>
        <authorList>
            <person name="Cloutier J."/>
            <person name="Laberge S."/>
            <person name="Antoun H."/>
        </authorList>
    </citation>
    <scope>NUCLEOTIDE SEQUENCE [GENOMIC DNA]</scope>
</reference>
<sequence>MDRRVVITGIGGLCGLGTDAPSIWKEMREGRSAIGPIVTSELHGLTGTIGAEIKTLPEHDIDRKQLVTMDRFSLLAVLAAREAMRQAGLSCDERNAYRFGAIVGVGGSGWEAIEASYRALLLNGARRAGVMDVPKAMPSAAAGQVSMSLGLRGPVFGVTSACASANHAIASAVDQIRCGRADVMLAGGSDAPFVFCVVKAWEAMRVIAPDTCRPFSSDRRGLVLGEGAGMAVLESYEHATARGATIIAEIAGIGLSADAFNLVSPAVEGPEAAMRACLADAGLNVQDVDYINAHGTGTKANDRMETEAIKRVFGGHANSMSISSTKSMHAHCLGAASALEMIACVMAIQEGVVPPTANYREPDPDCDLDVTPNVARERKVRVALSNAFAMAGMNAVLAFRQV</sequence>
<evidence type="ECO:0000255" key="1"/>
<evidence type="ECO:0000255" key="2">
    <source>
        <dbReference type="PROSITE-ProRule" id="PRU01348"/>
    </source>
</evidence>
<evidence type="ECO:0000305" key="3"/>
<organism>
    <name type="scientific">Rhizobium sp. (strain N33)</name>
    <dbReference type="NCBI Taxonomy" id="103798"/>
    <lineage>
        <taxon>Bacteria</taxon>
        <taxon>Pseudomonadati</taxon>
        <taxon>Pseudomonadota</taxon>
        <taxon>Alphaproteobacteria</taxon>
        <taxon>Hyphomicrobiales</taxon>
        <taxon>Rhizobiaceae</taxon>
        <taxon>Rhizobium/Agrobacterium group</taxon>
        <taxon>Rhizobium</taxon>
    </lineage>
</organism>
<feature type="chain" id="PRO_0000180355" description="Nodulation protein E">
    <location>
        <begin position="1"/>
        <end position="402"/>
    </location>
</feature>
<feature type="transmembrane region" description="Helical" evidence="1">
    <location>
        <begin position="329"/>
        <end position="348"/>
    </location>
</feature>
<feature type="domain" description="Ketosynthase family 3 (KS3)" evidence="2">
    <location>
        <begin position="2"/>
        <end position="401"/>
    </location>
</feature>
<feature type="active site" description="For beta-ketoacyl synthase activity" evidence="2">
    <location>
        <position position="162"/>
    </location>
</feature>
<feature type="active site" description="For beta-ketoacyl synthase activity" evidence="2">
    <location>
        <position position="294"/>
    </location>
</feature>
<feature type="active site" description="For beta-ketoacyl synthase activity" evidence="2">
    <location>
        <position position="331"/>
    </location>
</feature>
<proteinExistence type="inferred from homology"/>
<gene>
    <name type="primary">nodE</name>
</gene>
<name>NODE_RHIS3</name>
<keyword id="KW-0997">Cell inner membrane</keyword>
<keyword id="KW-1003">Cell membrane</keyword>
<keyword id="KW-0472">Membrane</keyword>
<keyword id="KW-0536">Nodulation</keyword>
<keyword id="KW-0808">Transferase</keyword>
<keyword id="KW-0812">Transmembrane</keyword>
<keyword id="KW-1133">Transmembrane helix</keyword>
<dbReference type="EC" id="2.3.1.-"/>
<dbReference type="EMBL" id="U53327">
    <property type="protein sequence ID" value="AAB16894.1"/>
    <property type="molecule type" value="Genomic_DNA"/>
</dbReference>
<dbReference type="SMR" id="P72331"/>
<dbReference type="GO" id="GO:0005886">
    <property type="term" value="C:plasma membrane"/>
    <property type="evidence" value="ECO:0007669"/>
    <property type="project" value="UniProtKB-SubCell"/>
</dbReference>
<dbReference type="GO" id="GO:0004315">
    <property type="term" value="F:3-oxoacyl-[acyl-carrier-protein] synthase activity"/>
    <property type="evidence" value="ECO:0007669"/>
    <property type="project" value="InterPro"/>
</dbReference>
<dbReference type="GO" id="GO:0006633">
    <property type="term" value="P:fatty acid biosynthetic process"/>
    <property type="evidence" value="ECO:0007669"/>
    <property type="project" value="InterPro"/>
</dbReference>
<dbReference type="CDD" id="cd00834">
    <property type="entry name" value="KAS_I_II"/>
    <property type="match status" value="1"/>
</dbReference>
<dbReference type="Gene3D" id="3.40.47.10">
    <property type="match status" value="1"/>
</dbReference>
<dbReference type="InterPro" id="IPR000794">
    <property type="entry name" value="Beta-ketoacyl_synthase"/>
</dbReference>
<dbReference type="InterPro" id="IPR018201">
    <property type="entry name" value="Ketoacyl_synth_AS"/>
</dbReference>
<dbReference type="InterPro" id="IPR014031">
    <property type="entry name" value="Ketoacyl_synth_C"/>
</dbReference>
<dbReference type="InterPro" id="IPR014030">
    <property type="entry name" value="Ketoacyl_synth_N"/>
</dbReference>
<dbReference type="InterPro" id="IPR020841">
    <property type="entry name" value="PKS_Beta-ketoAc_synthase_dom"/>
</dbReference>
<dbReference type="InterPro" id="IPR016039">
    <property type="entry name" value="Thiolase-like"/>
</dbReference>
<dbReference type="InterPro" id="IPR020615">
    <property type="entry name" value="Thiolase_acyl_enz_int_AS"/>
</dbReference>
<dbReference type="NCBIfam" id="NF005589">
    <property type="entry name" value="PRK07314.1"/>
    <property type="match status" value="1"/>
</dbReference>
<dbReference type="PANTHER" id="PTHR11712:SF352">
    <property type="entry name" value="3-OXOACYL-[ACYL-CARRIER-PROTEIN] SYNTHASE"/>
    <property type="match status" value="1"/>
</dbReference>
<dbReference type="PANTHER" id="PTHR11712">
    <property type="entry name" value="POLYKETIDE SYNTHASE-RELATED"/>
    <property type="match status" value="1"/>
</dbReference>
<dbReference type="Pfam" id="PF00109">
    <property type="entry name" value="ketoacyl-synt"/>
    <property type="match status" value="1"/>
</dbReference>
<dbReference type="Pfam" id="PF02801">
    <property type="entry name" value="Ketoacyl-synt_C"/>
    <property type="match status" value="1"/>
</dbReference>
<dbReference type="SMART" id="SM00825">
    <property type="entry name" value="PKS_KS"/>
    <property type="match status" value="1"/>
</dbReference>
<dbReference type="SUPFAM" id="SSF53901">
    <property type="entry name" value="Thiolase-like"/>
    <property type="match status" value="2"/>
</dbReference>
<dbReference type="PROSITE" id="PS00606">
    <property type="entry name" value="KS3_1"/>
    <property type="match status" value="1"/>
</dbReference>
<dbReference type="PROSITE" id="PS52004">
    <property type="entry name" value="KS3_2"/>
    <property type="match status" value="1"/>
</dbReference>
<protein>
    <recommendedName>
        <fullName>Nodulation protein E</fullName>
    </recommendedName>
    <alternativeName>
        <fullName>Host-specificity of nodulation protein B</fullName>
        <ecNumber>2.3.1.-</ecNumber>
    </alternativeName>
</protein>